<accession>Q9CDG9</accession>
<reference key="1">
    <citation type="journal article" date="2001" name="Genome Res.">
        <title>The complete genome sequence of the lactic acid bacterium Lactococcus lactis ssp. lactis IL1403.</title>
        <authorList>
            <person name="Bolotin A."/>
            <person name="Wincker P."/>
            <person name="Mauger S."/>
            <person name="Jaillon O."/>
            <person name="Malarme K."/>
            <person name="Weissenbach J."/>
            <person name="Ehrlich S.D."/>
            <person name="Sorokin A."/>
        </authorList>
    </citation>
    <scope>NUCLEOTIDE SEQUENCE [LARGE SCALE GENOMIC DNA]</scope>
    <source>
        <strain>IL1403</strain>
    </source>
</reference>
<feature type="chain" id="PRO_0000220581" description="UPF0177 protein YxdF">
    <location>
        <begin position="1"/>
        <end position="177"/>
    </location>
</feature>
<feature type="transmembrane region" description="Helical" evidence="1">
    <location>
        <begin position="2"/>
        <end position="22"/>
    </location>
</feature>
<feature type="transmembrane region" description="Helical" evidence="1">
    <location>
        <begin position="30"/>
        <end position="50"/>
    </location>
</feature>
<feature type="transmembrane region" description="Helical" evidence="1">
    <location>
        <begin position="117"/>
        <end position="137"/>
    </location>
</feature>
<feature type="transmembrane region" description="Helical" evidence="1">
    <location>
        <begin position="152"/>
        <end position="172"/>
    </location>
</feature>
<keyword id="KW-1003">Cell membrane</keyword>
<keyword id="KW-0472">Membrane</keyword>
<keyword id="KW-1185">Reference proteome</keyword>
<keyword id="KW-0812">Transmembrane</keyword>
<keyword id="KW-1133">Transmembrane helix</keyword>
<organism>
    <name type="scientific">Lactococcus lactis subsp. lactis (strain IL1403)</name>
    <name type="common">Streptococcus lactis</name>
    <dbReference type="NCBI Taxonomy" id="272623"/>
    <lineage>
        <taxon>Bacteria</taxon>
        <taxon>Bacillati</taxon>
        <taxon>Bacillota</taxon>
        <taxon>Bacilli</taxon>
        <taxon>Lactobacillales</taxon>
        <taxon>Streptococcaceae</taxon>
        <taxon>Lactococcus</taxon>
    </lineage>
</organism>
<gene>
    <name type="primary">yxdF</name>
    <name type="ordered locus">LL2251</name>
    <name type="ORF">L122569</name>
</gene>
<dbReference type="EMBL" id="AE005176">
    <property type="protein sequence ID" value="AAK06349.1"/>
    <property type="molecule type" value="Genomic_DNA"/>
</dbReference>
<dbReference type="PIR" id="C86906">
    <property type="entry name" value="C86906"/>
</dbReference>
<dbReference type="RefSeq" id="NP_268408.1">
    <property type="nucleotide sequence ID" value="NC_002662.1"/>
</dbReference>
<dbReference type="RefSeq" id="WP_010906415.1">
    <property type="nucleotide sequence ID" value="NC_002662.1"/>
</dbReference>
<dbReference type="SMR" id="Q9CDG9"/>
<dbReference type="PaxDb" id="272623-L122569"/>
<dbReference type="EnsemblBacteria" id="AAK06349">
    <property type="protein sequence ID" value="AAK06349"/>
    <property type="gene ID" value="L122569"/>
</dbReference>
<dbReference type="KEGG" id="lla:L122569"/>
<dbReference type="PATRIC" id="fig|272623.7.peg.2416"/>
<dbReference type="eggNOG" id="COG1266">
    <property type="taxonomic scope" value="Bacteria"/>
</dbReference>
<dbReference type="HOGENOM" id="CLU_103300_0_0_9"/>
<dbReference type="OrthoDB" id="4177129at2"/>
<dbReference type="Proteomes" id="UP000002196">
    <property type="component" value="Chromosome"/>
</dbReference>
<dbReference type="GO" id="GO:0005886">
    <property type="term" value="C:plasma membrane"/>
    <property type="evidence" value="ECO:0007669"/>
    <property type="project" value="UniProtKB-SubCell"/>
</dbReference>
<dbReference type="GO" id="GO:0004175">
    <property type="term" value="F:endopeptidase activity"/>
    <property type="evidence" value="ECO:0007669"/>
    <property type="project" value="UniProtKB-ARBA"/>
</dbReference>
<dbReference type="GO" id="GO:0080120">
    <property type="term" value="P:CAAX-box protein maturation"/>
    <property type="evidence" value="ECO:0007669"/>
    <property type="project" value="UniProtKB-ARBA"/>
</dbReference>
<dbReference type="InterPro" id="IPR052710">
    <property type="entry name" value="CAAX_protease"/>
</dbReference>
<dbReference type="InterPro" id="IPR003675">
    <property type="entry name" value="Rce1/LyrA-like_dom"/>
</dbReference>
<dbReference type="PANTHER" id="PTHR36435:SF1">
    <property type="entry name" value="CAAX AMINO TERMINAL PROTEASE FAMILY PROTEIN"/>
    <property type="match status" value="1"/>
</dbReference>
<dbReference type="PANTHER" id="PTHR36435">
    <property type="entry name" value="SLR1288 PROTEIN"/>
    <property type="match status" value="1"/>
</dbReference>
<dbReference type="Pfam" id="PF02517">
    <property type="entry name" value="Rce1-like"/>
    <property type="match status" value="1"/>
</dbReference>
<evidence type="ECO:0000255" key="1"/>
<evidence type="ECO:0000305" key="2"/>
<proteinExistence type="inferred from homology"/>
<sequence length="177" mass="20216">MTLVLILIFIIAWKLGYLKNTLKNWDLKRIFWLMGIVFFTLATNYLVTVLVLKTQIISSVTSDTGMSDILGQLPILCQKYILGIIVPLSEELLFRSYIFGSITNKKVAFLISSVLFALVHTGFSWYLLPYLILSFIITWVYSKRNNFIESAIVHSSVNLFGGSAIKLLDTFFKLLPY</sequence>
<protein>
    <recommendedName>
        <fullName>UPF0177 protein YxdF</fullName>
    </recommendedName>
</protein>
<name>YXDF_LACLA</name>
<comment type="subcellular location">
    <subcellularLocation>
        <location evidence="2">Cell membrane</location>
        <topology evidence="2">Multi-pass membrane protein</topology>
    </subcellularLocation>
</comment>
<comment type="similarity">
    <text evidence="2">Belongs to the UPF0177 family.</text>
</comment>